<proteinExistence type="inferred from homology"/>
<sequence>MLRIADKTFNSHLFTGTGKFASSQLMVEAIRASGSQLVTLAMKRVDLRQHNDAILMPLIEAGVTLLPNTSGAKTAEEAIFAAQLAREALGTHWLKLEIHPDARWLLPDPIETLKAAEALVKQGFVVLPYCGADPVLCKRLEEVGCAAVMPLGAPIGSNQGLETKAMLEIIIQQSTVPVVVDAGIGVPSHATQALEMGADAVLVNTAIAVADDPVMMATAFRLAVEAGVLARQAVPGNRSPYASATSPLTGFLEALA</sequence>
<reference key="1">
    <citation type="journal article" date="2011" name="J. Bacteriol.">
        <title>Comparative genomics of 28 Salmonella enterica isolates: evidence for CRISPR-mediated adaptive sublineage evolution.</title>
        <authorList>
            <person name="Fricke W.F."/>
            <person name="Mammel M.K."/>
            <person name="McDermott P.F."/>
            <person name="Tartera C."/>
            <person name="White D.G."/>
            <person name="Leclerc J.E."/>
            <person name="Ravel J."/>
            <person name="Cebula T.A."/>
        </authorList>
    </citation>
    <scope>NUCLEOTIDE SEQUENCE [LARGE SCALE GENOMIC DNA]</scope>
    <source>
        <strain>CVM19633</strain>
    </source>
</reference>
<organism>
    <name type="scientific">Salmonella schwarzengrund (strain CVM19633)</name>
    <dbReference type="NCBI Taxonomy" id="439843"/>
    <lineage>
        <taxon>Bacteria</taxon>
        <taxon>Pseudomonadati</taxon>
        <taxon>Pseudomonadota</taxon>
        <taxon>Gammaproteobacteria</taxon>
        <taxon>Enterobacterales</taxon>
        <taxon>Enterobacteriaceae</taxon>
        <taxon>Salmonella</taxon>
    </lineage>
</organism>
<dbReference type="EC" id="2.8.1.10" evidence="1"/>
<dbReference type="EMBL" id="CP001127">
    <property type="protein sequence ID" value="ACF90062.1"/>
    <property type="molecule type" value="Genomic_DNA"/>
</dbReference>
<dbReference type="RefSeq" id="WP_000944125.1">
    <property type="nucleotide sequence ID" value="NC_011094.1"/>
</dbReference>
<dbReference type="SMR" id="B4TQK0"/>
<dbReference type="KEGG" id="sew:SeSA_A4370"/>
<dbReference type="HOGENOM" id="CLU_062233_1_0_6"/>
<dbReference type="UniPathway" id="UPA00060"/>
<dbReference type="Proteomes" id="UP000001865">
    <property type="component" value="Chromosome"/>
</dbReference>
<dbReference type="GO" id="GO:0005737">
    <property type="term" value="C:cytoplasm"/>
    <property type="evidence" value="ECO:0007669"/>
    <property type="project" value="UniProtKB-SubCell"/>
</dbReference>
<dbReference type="GO" id="GO:1990107">
    <property type="term" value="F:thiazole synthase activity"/>
    <property type="evidence" value="ECO:0007669"/>
    <property type="project" value="UniProtKB-EC"/>
</dbReference>
<dbReference type="GO" id="GO:0009229">
    <property type="term" value="P:thiamine diphosphate biosynthetic process"/>
    <property type="evidence" value="ECO:0007669"/>
    <property type="project" value="UniProtKB-UniRule"/>
</dbReference>
<dbReference type="CDD" id="cd04728">
    <property type="entry name" value="ThiG"/>
    <property type="match status" value="1"/>
</dbReference>
<dbReference type="FunFam" id="3.20.20.70:FF:000049">
    <property type="entry name" value="Thiazole synthase"/>
    <property type="match status" value="1"/>
</dbReference>
<dbReference type="Gene3D" id="3.20.20.70">
    <property type="entry name" value="Aldolase class I"/>
    <property type="match status" value="1"/>
</dbReference>
<dbReference type="HAMAP" id="MF_00443">
    <property type="entry name" value="ThiG"/>
    <property type="match status" value="1"/>
</dbReference>
<dbReference type="InterPro" id="IPR013785">
    <property type="entry name" value="Aldolase_TIM"/>
</dbReference>
<dbReference type="InterPro" id="IPR033983">
    <property type="entry name" value="Thiazole_synthase_ThiG"/>
</dbReference>
<dbReference type="InterPro" id="IPR008867">
    <property type="entry name" value="ThiG"/>
</dbReference>
<dbReference type="PANTHER" id="PTHR34266">
    <property type="entry name" value="THIAZOLE SYNTHASE"/>
    <property type="match status" value="1"/>
</dbReference>
<dbReference type="PANTHER" id="PTHR34266:SF2">
    <property type="entry name" value="THIAZOLE SYNTHASE"/>
    <property type="match status" value="1"/>
</dbReference>
<dbReference type="Pfam" id="PF05690">
    <property type="entry name" value="ThiG"/>
    <property type="match status" value="1"/>
</dbReference>
<dbReference type="SUPFAM" id="SSF110399">
    <property type="entry name" value="ThiG-like"/>
    <property type="match status" value="1"/>
</dbReference>
<feature type="chain" id="PRO_1000196897" description="Thiazole synthase">
    <location>
        <begin position="1"/>
        <end position="256"/>
    </location>
</feature>
<feature type="active site" description="Schiff-base intermediate with DXP" evidence="1">
    <location>
        <position position="95"/>
    </location>
</feature>
<feature type="binding site" evidence="1">
    <location>
        <position position="156"/>
    </location>
    <ligand>
        <name>1-deoxy-D-xylulose 5-phosphate</name>
        <dbReference type="ChEBI" id="CHEBI:57792"/>
    </ligand>
</feature>
<feature type="binding site" evidence="1">
    <location>
        <begin position="182"/>
        <end position="183"/>
    </location>
    <ligand>
        <name>1-deoxy-D-xylulose 5-phosphate</name>
        <dbReference type="ChEBI" id="CHEBI:57792"/>
    </ligand>
</feature>
<feature type="binding site" evidence="1">
    <location>
        <begin position="204"/>
        <end position="205"/>
    </location>
    <ligand>
        <name>1-deoxy-D-xylulose 5-phosphate</name>
        <dbReference type="ChEBI" id="CHEBI:57792"/>
    </ligand>
</feature>
<comment type="function">
    <text evidence="1">Catalyzes the rearrangement of 1-deoxy-D-xylulose 5-phosphate (DXP) to produce the thiazole phosphate moiety of thiamine. Sulfur is provided by the thiocarboxylate moiety of the carrier protein ThiS. In vitro, sulfur can be provided by H(2)S.</text>
</comment>
<comment type="catalytic activity">
    <reaction evidence="1">
        <text>[ThiS sulfur-carrier protein]-C-terminal-Gly-aminoethanethioate + 2-iminoacetate + 1-deoxy-D-xylulose 5-phosphate = [ThiS sulfur-carrier protein]-C-terminal Gly-Gly + 2-[(2R,5Z)-2-carboxy-4-methylthiazol-5(2H)-ylidene]ethyl phosphate + 2 H2O + H(+)</text>
        <dbReference type="Rhea" id="RHEA:26297"/>
        <dbReference type="Rhea" id="RHEA-COMP:12909"/>
        <dbReference type="Rhea" id="RHEA-COMP:19908"/>
        <dbReference type="ChEBI" id="CHEBI:15377"/>
        <dbReference type="ChEBI" id="CHEBI:15378"/>
        <dbReference type="ChEBI" id="CHEBI:57792"/>
        <dbReference type="ChEBI" id="CHEBI:62899"/>
        <dbReference type="ChEBI" id="CHEBI:77846"/>
        <dbReference type="ChEBI" id="CHEBI:90778"/>
        <dbReference type="ChEBI" id="CHEBI:232372"/>
        <dbReference type="EC" id="2.8.1.10"/>
    </reaction>
</comment>
<comment type="pathway">
    <text evidence="1">Cofactor biosynthesis; thiamine diphosphate biosynthesis.</text>
</comment>
<comment type="subunit">
    <text evidence="1">Homotetramer. Forms heterodimers with either ThiH or ThiS.</text>
</comment>
<comment type="subcellular location">
    <subcellularLocation>
        <location evidence="1">Cytoplasm</location>
    </subcellularLocation>
</comment>
<comment type="similarity">
    <text evidence="1">Belongs to the ThiG family.</text>
</comment>
<accession>B4TQK0</accession>
<keyword id="KW-0963">Cytoplasm</keyword>
<keyword id="KW-0704">Schiff base</keyword>
<keyword id="KW-0784">Thiamine biosynthesis</keyword>
<keyword id="KW-0808">Transferase</keyword>
<evidence type="ECO:0000255" key="1">
    <source>
        <dbReference type="HAMAP-Rule" id="MF_00443"/>
    </source>
</evidence>
<gene>
    <name evidence="1" type="primary">thiG</name>
    <name type="ordered locus">SeSA_A4370</name>
</gene>
<protein>
    <recommendedName>
        <fullName evidence="1">Thiazole synthase</fullName>
        <ecNumber evidence="1">2.8.1.10</ecNumber>
    </recommendedName>
</protein>
<name>THIG_SALSV</name>